<sequence length="237" mass="25607">ADTIVAVELDTYPNTDIGDPNYPHIGIDIKSIRSKKIAKWNMQDGKVATAHIIYNSVGKRLSAVVSYPNADSATVSYDVDLDNVLPEWVRVGLSATTGLYKETNTILSWSFTSKLKSNSTAETNALHFTFNQFTKDQKDLILQGDATTDSDGNLQLTRVSSDGTPQGNSVGRALFYAPVHIWESSAVVASFDATFTFLIKSPDSDPADGITFFISNMDSTIPSGSGGRLLGLFPDAN</sequence>
<accession>A0A067XG71</accession>
<accession>C0HJC6</accession>
<protein>
    <recommendedName>
        <fullName evidence="6">Lectin ConGF</fullName>
    </recommendedName>
</protein>
<feature type="chain" id="PRO_0000440069" description="Lectin ConGF" evidence="4">
    <location>
        <begin position="1"/>
        <end position="237"/>
    </location>
</feature>
<feature type="binding site" evidence="4 12">
    <location>
        <position position="8"/>
    </location>
    <ligand>
        <name>Mn(2+)</name>
        <dbReference type="ChEBI" id="CHEBI:29035"/>
    </ligand>
</feature>
<feature type="binding site" evidence="4 12">
    <location>
        <position position="10"/>
    </location>
    <ligand>
        <name>Ca(2+)</name>
        <dbReference type="ChEBI" id="CHEBI:29108"/>
    </ligand>
</feature>
<feature type="binding site" evidence="4 12">
    <location>
        <position position="10"/>
    </location>
    <ligand>
        <name>Mn(2+)</name>
        <dbReference type="ChEBI" id="CHEBI:29035"/>
    </ligand>
</feature>
<feature type="binding site" evidence="4 12">
    <location>
        <position position="12"/>
    </location>
    <ligand>
        <name>Ca(2+)</name>
        <dbReference type="ChEBI" id="CHEBI:29108"/>
    </ligand>
</feature>
<feature type="binding site" evidence="4 12">
    <location>
        <position position="14"/>
    </location>
    <ligand>
        <name>a carbohydrate</name>
        <dbReference type="ChEBI" id="CHEBI:16646"/>
    </ligand>
</feature>
<feature type="binding site" evidence="4 12">
    <location>
        <position position="14"/>
    </location>
    <ligand>
        <name>Ca(2+)</name>
        <dbReference type="ChEBI" id="CHEBI:29108"/>
    </ligand>
</feature>
<feature type="binding site" evidence="4 12">
    <location>
        <position position="19"/>
    </location>
    <ligand>
        <name>Ca(2+)</name>
        <dbReference type="ChEBI" id="CHEBI:29108"/>
    </ligand>
</feature>
<feature type="binding site" evidence="4 12">
    <location>
        <position position="19"/>
    </location>
    <ligand>
        <name>Mn(2+)</name>
        <dbReference type="ChEBI" id="CHEBI:29035"/>
    </ligand>
</feature>
<feature type="binding site" evidence="4 12">
    <location>
        <position position="24"/>
    </location>
    <ligand>
        <name>Mn(2+)</name>
        <dbReference type="ChEBI" id="CHEBI:29035"/>
    </ligand>
</feature>
<feature type="binding site" evidence="4 12">
    <location>
        <position position="99"/>
    </location>
    <ligand>
        <name>a carbohydrate</name>
        <dbReference type="ChEBI" id="CHEBI:16646"/>
    </ligand>
</feature>
<feature type="binding site" evidence="4 12">
    <location>
        <position position="100"/>
    </location>
    <ligand>
        <name>a carbohydrate</name>
        <dbReference type="ChEBI" id="CHEBI:16646"/>
    </ligand>
</feature>
<feature type="binding site" evidence="4 12">
    <location>
        <position position="208"/>
    </location>
    <ligand>
        <name>a carbohydrate</name>
        <dbReference type="ChEBI" id="CHEBI:16646"/>
    </ligand>
</feature>
<feature type="binding site" evidence="4 12">
    <location>
        <position position="228"/>
    </location>
    <ligand>
        <name>a carbohydrate</name>
        <dbReference type="ChEBI" id="CHEBI:16646"/>
    </ligand>
</feature>
<feature type="strand" evidence="13">
    <location>
        <begin position="4"/>
        <end position="10"/>
    </location>
</feature>
<feature type="helix" evidence="13">
    <location>
        <begin position="15"/>
        <end position="17"/>
    </location>
</feature>
<feature type="strand" evidence="13">
    <location>
        <begin position="24"/>
        <end position="33"/>
    </location>
</feature>
<feature type="strand" evidence="13">
    <location>
        <begin position="35"/>
        <end position="39"/>
    </location>
</feature>
<feature type="strand" evidence="13">
    <location>
        <begin position="47"/>
        <end position="55"/>
    </location>
</feature>
<feature type="turn" evidence="13">
    <location>
        <begin position="56"/>
        <end position="59"/>
    </location>
</feature>
<feature type="strand" evidence="13">
    <location>
        <begin position="60"/>
        <end position="66"/>
    </location>
</feature>
<feature type="strand" evidence="13">
    <location>
        <begin position="72"/>
        <end position="78"/>
    </location>
</feature>
<feature type="turn" evidence="13">
    <location>
        <begin position="82"/>
        <end position="84"/>
    </location>
</feature>
<feature type="strand" evidence="13">
    <location>
        <begin position="87"/>
        <end position="96"/>
    </location>
</feature>
<feature type="strand" evidence="13">
    <location>
        <begin position="105"/>
        <end position="116"/>
    </location>
</feature>
<feature type="strand" evidence="13">
    <location>
        <begin position="124"/>
        <end position="132"/>
    </location>
</feature>
<feature type="strand" evidence="13">
    <location>
        <begin position="140"/>
        <end position="144"/>
    </location>
</feature>
<feature type="strand" evidence="13">
    <location>
        <begin position="154"/>
        <end position="157"/>
    </location>
</feature>
<feature type="strand" evidence="13">
    <location>
        <begin position="170"/>
        <end position="177"/>
    </location>
</feature>
<feature type="strand" evidence="13">
    <location>
        <begin position="187"/>
        <end position="198"/>
    </location>
</feature>
<feature type="strand" evidence="13">
    <location>
        <begin position="202"/>
        <end position="205"/>
    </location>
</feature>
<feature type="strand" evidence="13">
    <location>
        <begin position="209"/>
        <end position="216"/>
    </location>
</feature>
<feature type="helix" evidence="13">
    <location>
        <begin position="227"/>
        <end position="229"/>
    </location>
</feature>
<feature type="turn" evidence="13">
    <location>
        <begin position="230"/>
        <end position="232"/>
    </location>
</feature>
<keyword id="KW-0002">3D-structure</keyword>
<keyword id="KW-0106">Calcium</keyword>
<keyword id="KW-0903">Direct protein sequencing</keyword>
<keyword id="KW-0430">Lectin</keyword>
<keyword id="KW-0464">Manganese</keyword>
<keyword id="KW-0465">Mannose-binding</keyword>
<keyword id="KW-0479">Metal-binding</keyword>
<proteinExistence type="evidence at protein level"/>
<organism evidence="11">
    <name type="scientific">Canavalia grandiflora</name>
    <name type="common">Jackbean</name>
    <dbReference type="NCBI Taxonomy" id="232301"/>
    <lineage>
        <taxon>Eukaryota</taxon>
        <taxon>Viridiplantae</taxon>
        <taxon>Streptophyta</taxon>
        <taxon>Embryophyta</taxon>
        <taxon>Tracheophyta</taxon>
        <taxon>Spermatophyta</taxon>
        <taxon>Magnoliopsida</taxon>
        <taxon>eudicotyledons</taxon>
        <taxon>Gunneridae</taxon>
        <taxon>Pentapetalae</taxon>
        <taxon>rosids</taxon>
        <taxon>fabids</taxon>
        <taxon>Fabales</taxon>
        <taxon>Fabaceae</taxon>
        <taxon>Papilionoideae</taxon>
        <taxon>50 kb inversion clade</taxon>
        <taxon>NPAAA clade</taxon>
        <taxon>indigoferoid/millettioid clade</taxon>
        <taxon>Phaseoleae</taxon>
        <taxon>Canavalia</taxon>
    </lineage>
</organism>
<comment type="function">
    <text evidence="2 3 4">Lectin (PubMed:24361256). Induces paw edema in mice (PubMed:22368061). Has a weak vasorelaxant effect on rat aorta (PubMed:24361256). Has anti-inflammatory and anti-nociceptive effects (PubMed:19153712).</text>
</comment>
<comment type="subunit">
    <text evidence="4">Homotetramer; dimer of dimers.</text>
</comment>
<comment type="PTM">
    <text evidence="9 10">Concanavalin A-like lectins of the Diocleinae subtribe undergo proteolytic processing referred to as circular permutation. The propeptide is split into an N-terminal and a C-terminal part, the gamma and beta chain, respectively. These are then religated in beta-gamma order to form the mature alpha chain. The beta and gamma chains can often be detected in cell extracts. Residues 1-118 of the mature chain, as displayed here, probably constitute the beta chain in the propeptide, residues 119-237 the gamma chain.</text>
</comment>
<comment type="mass spectrometry" mass="25606.0" error="2.0" method="Electrospray" evidence="4"/>
<comment type="mass spectrometry" mass="25612.0" error="2.0" method="Electrospray" evidence="3"/>
<comment type="miscellaneous">
    <text evidence="4 8">Binds one manganese (or other transition metal) ion and one calcium ion (PubMed:24361256). The metal ions are essential for the saccharide-binding and cell-agglutinating activities (Probable).</text>
</comment>
<comment type="similarity">
    <text evidence="1">Belongs to the leguminous lectin family.</text>
</comment>
<evidence type="ECO:0000255" key="1"/>
<evidence type="ECO:0000269" key="2">
    <source>
    </source>
</evidence>
<evidence type="ECO:0000269" key="3">
    <source>
    </source>
</evidence>
<evidence type="ECO:0000269" key="4">
    <source>
    </source>
</evidence>
<evidence type="ECO:0000303" key="5">
    <source>
    </source>
</evidence>
<evidence type="ECO:0000303" key="6">
    <source>
    </source>
</evidence>
<evidence type="ECO:0000303" key="7">
    <source>
    </source>
</evidence>
<evidence type="ECO:0000305" key="8"/>
<evidence type="ECO:0000305" key="9">
    <source>
    </source>
</evidence>
<evidence type="ECO:0000305" key="10">
    <source>
    </source>
</evidence>
<evidence type="ECO:0000312" key="11">
    <source>
        <dbReference type="PDB" id="4L8Q"/>
    </source>
</evidence>
<evidence type="ECO:0007744" key="12">
    <source>
        <dbReference type="PDB" id="4L8Q"/>
    </source>
</evidence>
<evidence type="ECO:0007829" key="13">
    <source>
        <dbReference type="PDB" id="4L8Q"/>
    </source>
</evidence>
<reference evidence="11" key="1">
    <citation type="journal article" date="2014" name="Arch. Biochem. Biophys.">
        <title>Vasorelaxant activity of Canavalia grandiflora seed lectin: A structural analysis.</title>
        <authorList>
            <person name="Barroso-Neto I.L."/>
            <person name="Simoes R.C."/>
            <person name="Rocha B.A."/>
            <person name="Bezerra M.J."/>
            <person name="Pereira-Junior F.N."/>
            <person name="Silva Osterne V.J."/>
            <person name="Nascimento K.S."/>
            <person name="Nagano C.S."/>
            <person name="Delatorre P."/>
            <person name="Pereira M.G."/>
            <person name="Freitas Pires A."/>
            <person name="Sampaio A.H."/>
            <person name="Assreuy A.M."/>
            <person name="Cavada B.S."/>
        </authorList>
    </citation>
    <scope>PROTEIN SEQUENCE</scope>
    <scope>X-RAY CRYSTALLOGRAPHY (2.30 ANGSTROMS) IN COMPLEX WITH CARBOHYDRATE; CALCIUM AND MANGANESE</scope>
    <scope>FUNCTION</scope>
    <scope>SUBUNIT</scope>
    <scope>MASS SPECTROMETRY</scope>
    <scope>IDENTIFICATION BY MASS SPECTROMETRY</scope>
    <source>
        <tissue evidence="7">Seed</tissue>
    </source>
</reference>
<reference evidence="8" key="2">
    <citation type="journal article" date="2012" name="Rapid Commun. Mass Spectrom.">
        <title>Protein crystal content analysis by mass spectrometry and preliminary X-ray diffraction of a lectin from Canavalia grandiflora seeds with modulatory role in inflammation.</title>
        <authorList>
            <person name="Simoes R.C."/>
            <person name="Rocha B.A."/>
            <person name="Bezerra M.J."/>
            <person name="Barroso-Neto I.L."/>
            <person name="Pereira-Junior F.N."/>
            <person name="da Mata Moura R."/>
            <person name="do Nascimento K.S."/>
            <person name="Nagano C.S."/>
            <person name="Delatorre P."/>
            <person name="de Freitas Pires A."/>
            <person name="Assreuy A.M."/>
            <person name="Sampaio A.H."/>
            <person name="Cavada B.S."/>
        </authorList>
    </citation>
    <scope>PROTEIN SEQUENCE OF 39-128; 152-162; 177-203 AND 214-237</scope>
    <scope>FUNCTION</scope>
    <scope>CRYSTALLIZATION</scope>
    <scope>MASS SPECTROMETRY</scope>
    <scope>IDENTIFICATION BY MASS SPECTROMETRY</scope>
    <source>
        <tissue evidence="6">Seed</tissue>
    </source>
</reference>
<reference evidence="8" key="3">
    <citation type="journal article" date="2009" name="Naunyn Schmiedebergs Arch. Pharmacol.">
        <title>Lectin extracted from Canavalia grandiflora seeds presents potential anti-inflammatory and analgesic effects.</title>
        <authorList>
            <person name="Nunes B.S."/>
            <person name="Rensonnet N.S."/>
            <person name="Dal-Secco D."/>
            <person name="Vieira S.M."/>
            <person name="Cavada B.S."/>
            <person name="Teixeira E.H."/>
            <person name="Moura T.R."/>
            <person name="Teixeira C.S."/>
            <person name="Clemente-Napimoga J.T."/>
            <person name="Cunha F.Q."/>
            <person name="Napimoga M.H."/>
        </authorList>
    </citation>
    <scope>FUNCTION</scope>
    <source>
        <tissue evidence="5">Seed</tissue>
    </source>
</reference>
<name>LECA_CANGR</name>
<dbReference type="PDB" id="4L8Q">
    <property type="method" value="X-ray"/>
    <property type="resolution" value="2.30 A"/>
    <property type="chains" value="A=1-237"/>
</dbReference>
<dbReference type="PDBsum" id="4L8Q"/>
<dbReference type="SMR" id="A0A067XG71"/>
<dbReference type="UniLectin" id="A0A067XG71"/>
<dbReference type="EvolutionaryTrace" id="A0A067XG71"/>
<dbReference type="GO" id="GO:0005537">
    <property type="term" value="F:D-mannose binding"/>
    <property type="evidence" value="ECO:0007669"/>
    <property type="project" value="UniProtKB-KW"/>
</dbReference>
<dbReference type="GO" id="GO:0046872">
    <property type="term" value="F:metal ion binding"/>
    <property type="evidence" value="ECO:0007669"/>
    <property type="project" value="UniProtKB-KW"/>
</dbReference>
<dbReference type="CDD" id="cd06899">
    <property type="entry name" value="lectin_legume_LecRK_Arcelin_ConA"/>
    <property type="match status" value="1"/>
</dbReference>
<dbReference type="FunFam" id="2.60.120.200:FF:000227">
    <property type="entry name" value="Concanavalin-A"/>
    <property type="match status" value="1"/>
</dbReference>
<dbReference type="Gene3D" id="2.60.120.200">
    <property type="match status" value="1"/>
</dbReference>
<dbReference type="InterPro" id="IPR013320">
    <property type="entry name" value="ConA-like_dom_sf"/>
</dbReference>
<dbReference type="InterPro" id="IPR000985">
    <property type="entry name" value="Lectin_LegA_CS"/>
</dbReference>
<dbReference type="InterPro" id="IPR019825">
    <property type="entry name" value="Lectin_legB_Mn/Ca_BS"/>
</dbReference>
<dbReference type="InterPro" id="IPR001220">
    <property type="entry name" value="Legume_lectin_dom"/>
</dbReference>
<dbReference type="InterPro" id="IPR050258">
    <property type="entry name" value="Leguminous_Lectin"/>
</dbReference>
<dbReference type="PANTHER" id="PTHR32401">
    <property type="entry name" value="CONCANAVALIN A-LIKE LECTIN FAMILY PROTEIN"/>
    <property type="match status" value="1"/>
</dbReference>
<dbReference type="PANTHER" id="PTHR32401:SF47">
    <property type="entry name" value="LEGUME LECTIN DOMAIN-CONTAINING PROTEIN"/>
    <property type="match status" value="1"/>
</dbReference>
<dbReference type="Pfam" id="PF00139">
    <property type="entry name" value="Lectin_legB"/>
    <property type="match status" value="2"/>
</dbReference>
<dbReference type="SUPFAM" id="SSF49899">
    <property type="entry name" value="Concanavalin A-like lectins/glucanases"/>
    <property type="match status" value="1"/>
</dbReference>
<dbReference type="PROSITE" id="PS00308">
    <property type="entry name" value="LECTIN_LEGUME_ALPHA"/>
    <property type="match status" value="1"/>
</dbReference>
<dbReference type="PROSITE" id="PS00307">
    <property type="entry name" value="LECTIN_LEGUME_BETA"/>
    <property type="match status" value="1"/>
</dbReference>